<accession>C1CF99</accession>
<proteinExistence type="inferred from homology"/>
<comment type="function">
    <text evidence="1">F(1)F(0) ATP synthase produces ATP from ADP in the presence of a proton or sodium gradient. F-type ATPases consist of two structural domains, F(1) containing the extramembraneous catalytic core and F(0) containing the membrane proton channel, linked together by a central stalk and a peripheral stalk. During catalysis, ATP synthesis in the catalytic domain of F(1) is coupled via a rotary mechanism of the central stalk subunits to proton translocation.</text>
</comment>
<comment type="function">
    <text evidence="1">Key component of the F(0) channel; it plays a direct role in translocation across the membrane. A homomeric c-ring of between 10-14 subunits forms the central stalk rotor element with the F(1) delta and epsilon subunits.</text>
</comment>
<comment type="subunit">
    <text evidence="1">F-type ATPases have 2 components, F(1) - the catalytic core - and F(0) - the membrane proton channel. F(1) has five subunits: alpha(3), beta(3), gamma(1), delta(1), epsilon(1). F(0) has three main subunits: a(1), b(2) and c(10-14). The alpha and beta chains form an alternating ring which encloses part of the gamma chain. F(1) is attached to F(0) by a central stalk formed by the gamma and epsilon chains, while a peripheral stalk is formed by the delta and b chains.</text>
</comment>
<comment type="subcellular location">
    <subcellularLocation>
        <location evidence="1">Cell membrane</location>
        <topology evidence="1">Multi-pass membrane protein</topology>
    </subcellularLocation>
</comment>
<comment type="similarity">
    <text evidence="1">Belongs to the ATPase C chain family.</text>
</comment>
<name>ATPL_STRZJ</name>
<feature type="chain" id="PRO_1000184515" description="ATP synthase subunit c">
    <location>
        <begin position="1"/>
        <end position="66"/>
    </location>
</feature>
<feature type="transmembrane region" description="Helical" evidence="1">
    <location>
        <begin position="3"/>
        <end position="23"/>
    </location>
</feature>
<feature type="transmembrane region" description="Helical" evidence="1">
    <location>
        <begin position="45"/>
        <end position="65"/>
    </location>
</feature>
<feature type="site" description="Reversibly protonated during proton transport" evidence="1">
    <location>
        <position position="52"/>
    </location>
</feature>
<gene>
    <name evidence="1" type="primary">atpE</name>
    <name type="ordered locus">SPJ_1416</name>
</gene>
<sequence length="66" mass="7260">MNLTFLGLCIACMGVSVGEGLLMNGLFKSVARQPDMLSEFRSLMFLGVAFIEGTFFVTLVFSFIIK</sequence>
<evidence type="ECO:0000255" key="1">
    <source>
        <dbReference type="HAMAP-Rule" id="MF_01396"/>
    </source>
</evidence>
<organism>
    <name type="scientific">Streptococcus pneumoniae (strain JJA)</name>
    <dbReference type="NCBI Taxonomy" id="488222"/>
    <lineage>
        <taxon>Bacteria</taxon>
        <taxon>Bacillati</taxon>
        <taxon>Bacillota</taxon>
        <taxon>Bacilli</taxon>
        <taxon>Lactobacillales</taxon>
        <taxon>Streptococcaceae</taxon>
        <taxon>Streptococcus</taxon>
    </lineage>
</organism>
<dbReference type="EMBL" id="CP000919">
    <property type="protein sequence ID" value="ACO18577.1"/>
    <property type="molecule type" value="Genomic_DNA"/>
</dbReference>
<dbReference type="RefSeq" id="WP_001054562.1">
    <property type="nucleotide sequence ID" value="NC_012466.1"/>
</dbReference>
<dbReference type="SMR" id="C1CF99"/>
<dbReference type="KEGG" id="sjj:SPJ_1416"/>
<dbReference type="HOGENOM" id="CLU_148047_5_2_9"/>
<dbReference type="Proteomes" id="UP000002206">
    <property type="component" value="Chromosome"/>
</dbReference>
<dbReference type="GO" id="GO:0005886">
    <property type="term" value="C:plasma membrane"/>
    <property type="evidence" value="ECO:0007669"/>
    <property type="project" value="UniProtKB-SubCell"/>
</dbReference>
<dbReference type="GO" id="GO:0045259">
    <property type="term" value="C:proton-transporting ATP synthase complex"/>
    <property type="evidence" value="ECO:0007669"/>
    <property type="project" value="UniProtKB-KW"/>
</dbReference>
<dbReference type="GO" id="GO:0033177">
    <property type="term" value="C:proton-transporting two-sector ATPase complex, proton-transporting domain"/>
    <property type="evidence" value="ECO:0007669"/>
    <property type="project" value="InterPro"/>
</dbReference>
<dbReference type="GO" id="GO:0008289">
    <property type="term" value="F:lipid binding"/>
    <property type="evidence" value="ECO:0007669"/>
    <property type="project" value="UniProtKB-KW"/>
</dbReference>
<dbReference type="GO" id="GO:0046933">
    <property type="term" value="F:proton-transporting ATP synthase activity, rotational mechanism"/>
    <property type="evidence" value="ECO:0007669"/>
    <property type="project" value="UniProtKB-UniRule"/>
</dbReference>
<dbReference type="CDD" id="cd18121">
    <property type="entry name" value="ATP-synt_Fo_c"/>
    <property type="match status" value="1"/>
</dbReference>
<dbReference type="FunFam" id="1.20.20.10:FF:000017">
    <property type="entry name" value="ATP synthase subunit c"/>
    <property type="match status" value="1"/>
</dbReference>
<dbReference type="Gene3D" id="1.20.20.10">
    <property type="entry name" value="F1F0 ATP synthase subunit C"/>
    <property type="match status" value="1"/>
</dbReference>
<dbReference type="HAMAP" id="MF_01396">
    <property type="entry name" value="ATP_synth_c_bact"/>
    <property type="match status" value="1"/>
</dbReference>
<dbReference type="InterPro" id="IPR000454">
    <property type="entry name" value="ATP_synth_F0_csu"/>
</dbReference>
<dbReference type="InterPro" id="IPR020537">
    <property type="entry name" value="ATP_synth_F0_csu_DDCD_BS"/>
</dbReference>
<dbReference type="InterPro" id="IPR038662">
    <property type="entry name" value="ATP_synth_F0_csu_sf"/>
</dbReference>
<dbReference type="InterPro" id="IPR002379">
    <property type="entry name" value="ATPase_proteolipid_c-like_dom"/>
</dbReference>
<dbReference type="InterPro" id="IPR035921">
    <property type="entry name" value="F/V-ATP_Csub_sf"/>
</dbReference>
<dbReference type="NCBIfam" id="NF009997">
    <property type="entry name" value="PRK13467.1"/>
    <property type="match status" value="1"/>
</dbReference>
<dbReference type="Pfam" id="PF00137">
    <property type="entry name" value="ATP-synt_C"/>
    <property type="match status" value="1"/>
</dbReference>
<dbReference type="PRINTS" id="PR00124">
    <property type="entry name" value="ATPASEC"/>
</dbReference>
<dbReference type="SUPFAM" id="SSF81333">
    <property type="entry name" value="F1F0 ATP synthase subunit C"/>
    <property type="match status" value="1"/>
</dbReference>
<dbReference type="PROSITE" id="PS00605">
    <property type="entry name" value="ATPASE_C"/>
    <property type="match status" value="1"/>
</dbReference>
<protein>
    <recommendedName>
        <fullName evidence="1">ATP synthase subunit c</fullName>
    </recommendedName>
    <alternativeName>
        <fullName evidence="1">ATP synthase F(0) sector subunit c</fullName>
    </alternativeName>
    <alternativeName>
        <fullName evidence="1">F-type ATPase subunit c</fullName>
        <shortName evidence="1">F-ATPase subunit c</shortName>
    </alternativeName>
    <alternativeName>
        <fullName evidence="1">Lipid-binding protein</fullName>
    </alternativeName>
</protein>
<keyword id="KW-0066">ATP synthesis</keyword>
<keyword id="KW-1003">Cell membrane</keyword>
<keyword id="KW-0138">CF(0)</keyword>
<keyword id="KW-0375">Hydrogen ion transport</keyword>
<keyword id="KW-0406">Ion transport</keyword>
<keyword id="KW-0446">Lipid-binding</keyword>
<keyword id="KW-0472">Membrane</keyword>
<keyword id="KW-0812">Transmembrane</keyword>
<keyword id="KW-1133">Transmembrane helix</keyword>
<keyword id="KW-0813">Transport</keyword>
<reference key="1">
    <citation type="journal article" date="2010" name="Genome Biol.">
        <title>Structure and dynamics of the pan-genome of Streptococcus pneumoniae and closely related species.</title>
        <authorList>
            <person name="Donati C."/>
            <person name="Hiller N.L."/>
            <person name="Tettelin H."/>
            <person name="Muzzi A."/>
            <person name="Croucher N.J."/>
            <person name="Angiuoli S.V."/>
            <person name="Oggioni M."/>
            <person name="Dunning Hotopp J.C."/>
            <person name="Hu F.Z."/>
            <person name="Riley D.R."/>
            <person name="Covacci A."/>
            <person name="Mitchell T.J."/>
            <person name="Bentley S.D."/>
            <person name="Kilian M."/>
            <person name="Ehrlich G.D."/>
            <person name="Rappuoli R."/>
            <person name="Moxon E.R."/>
            <person name="Masignani V."/>
        </authorList>
    </citation>
    <scope>NUCLEOTIDE SEQUENCE [LARGE SCALE GENOMIC DNA]</scope>
    <source>
        <strain>JJA</strain>
    </source>
</reference>